<evidence type="ECO:0000255" key="1">
    <source>
        <dbReference type="HAMAP-Rule" id="MF_00440"/>
    </source>
</evidence>
<gene>
    <name evidence="1" type="primary">nrdR</name>
    <name type="ordered locus">SACOL1733</name>
</gene>
<name>NRDR_STAAC</name>
<proteinExistence type="inferred from homology"/>
<reference key="1">
    <citation type="journal article" date="2005" name="J. Bacteriol.">
        <title>Insights on evolution of virulence and resistance from the complete genome analysis of an early methicillin-resistant Staphylococcus aureus strain and a biofilm-producing methicillin-resistant Staphylococcus epidermidis strain.</title>
        <authorList>
            <person name="Gill S.R."/>
            <person name="Fouts D.E."/>
            <person name="Archer G.L."/>
            <person name="Mongodin E.F."/>
            <person name="DeBoy R.T."/>
            <person name="Ravel J."/>
            <person name="Paulsen I.T."/>
            <person name="Kolonay J.F."/>
            <person name="Brinkac L.M."/>
            <person name="Beanan M.J."/>
            <person name="Dodson R.J."/>
            <person name="Daugherty S.C."/>
            <person name="Madupu R."/>
            <person name="Angiuoli S.V."/>
            <person name="Durkin A.S."/>
            <person name="Haft D.H."/>
            <person name="Vamathevan J.J."/>
            <person name="Khouri H."/>
            <person name="Utterback T.R."/>
            <person name="Lee C."/>
            <person name="Dimitrov G."/>
            <person name="Jiang L."/>
            <person name="Qin H."/>
            <person name="Weidman J."/>
            <person name="Tran K."/>
            <person name="Kang K.H."/>
            <person name="Hance I.R."/>
            <person name="Nelson K.E."/>
            <person name="Fraser C.M."/>
        </authorList>
    </citation>
    <scope>NUCLEOTIDE SEQUENCE [LARGE SCALE GENOMIC DNA]</scope>
    <source>
        <strain>COL</strain>
    </source>
</reference>
<dbReference type="EMBL" id="CP000046">
    <property type="protein sequence ID" value="AAW36837.1"/>
    <property type="molecule type" value="Genomic_DNA"/>
</dbReference>
<dbReference type="RefSeq" id="WP_000650082.1">
    <property type="nucleotide sequence ID" value="NZ_JBGOFO010000003.1"/>
</dbReference>
<dbReference type="SMR" id="Q5HF87"/>
<dbReference type="GeneID" id="66839865"/>
<dbReference type="KEGG" id="sac:SACOL1733"/>
<dbReference type="HOGENOM" id="CLU_108412_0_0_9"/>
<dbReference type="Proteomes" id="UP000000530">
    <property type="component" value="Chromosome"/>
</dbReference>
<dbReference type="GO" id="GO:0005524">
    <property type="term" value="F:ATP binding"/>
    <property type="evidence" value="ECO:0007669"/>
    <property type="project" value="UniProtKB-KW"/>
</dbReference>
<dbReference type="GO" id="GO:0003677">
    <property type="term" value="F:DNA binding"/>
    <property type="evidence" value="ECO:0007669"/>
    <property type="project" value="UniProtKB-KW"/>
</dbReference>
<dbReference type="GO" id="GO:0008270">
    <property type="term" value="F:zinc ion binding"/>
    <property type="evidence" value="ECO:0007669"/>
    <property type="project" value="UniProtKB-UniRule"/>
</dbReference>
<dbReference type="GO" id="GO:0045892">
    <property type="term" value="P:negative regulation of DNA-templated transcription"/>
    <property type="evidence" value="ECO:0007669"/>
    <property type="project" value="UniProtKB-UniRule"/>
</dbReference>
<dbReference type="HAMAP" id="MF_00440">
    <property type="entry name" value="NrdR"/>
    <property type="match status" value="1"/>
</dbReference>
<dbReference type="InterPro" id="IPR005144">
    <property type="entry name" value="ATP-cone_dom"/>
</dbReference>
<dbReference type="InterPro" id="IPR055173">
    <property type="entry name" value="NrdR-like_N"/>
</dbReference>
<dbReference type="InterPro" id="IPR003796">
    <property type="entry name" value="RNR_NrdR-like"/>
</dbReference>
<dbReference type="NCBIfam" id="TIGR00244">
    <property type="entry name" value="transcriptional regulator NrdR"/>
    <property type="match status" value="1"/>
</dbReference>
<dbReference type="PANTHER" id="PTHR30455">
    <property type="entry name" value="TRANSCRIPTIONAL REPRESSOR NRDR"/>
    <property type="match status" value="1"/>
</dbReference>
<dbReference type="PANTHER" id="PTHR30455:SF2">
    <property type="entry name" value="TRANSCRIPTIONAL REPRESSOR NRDR"/>
    <property type="match status" value="1"/>
</dbReference>
<dbReference type="Pfam" id="PF03477">
    <property type="entry name" value="ATP-cone"/>
    <property type="match status" value="1"/>
</dbReference>
<dbReference type="Pfam" id="PF22811">
    <property type="entry name" value="Zn_ribbon_NrdR"/>
    <property type="match status" value="1"/>
</dbReference>
<dbReference type="PROSITE" id="PS51161">
    <property type="entry name" value="ATP_CONE"/>
    <property type="match status" value="1"/>
</dbReference>
<organism>
    <name type="scientific">Staphylococcus aureus (strain COL)</name>
    <dbReference type="NCBI Taxonomy" id="93062"/>
    <lineage>
        <taxon>Bacteria</taxon>
        <taxon>Bacillati</taxon>
        <taxon>Bacillota</taxon>
        <taxon>Bacilli</taxon>
        <taxon>Bacillales</taxon>
        <taxon>Staphylococcaceae</taxon>
        <taxon>Staphylococcus</taxon>
    </lineage>
</organism>
<sequence length="156" mass="18204">MKCPKCNSTQSKVVDSRHADELNAIRRRRECENCGTRFTTFEHIEVSQLIVVKKDGTREQFSREKILNGLVRSCEKRPVRYQQLEDITNKVEWQLRDEGHTEVSSRDIGEHVMNLLMHVDQVSYVRFASVYKEFKDVDQLLASMQGILSENKRSDA</sequence>
<protein>
    <recommendedName>
        <fullName evidence="1">Transcriptional repressor NrdR</fullName>
    </recommendedName>
</protein>
<keyword id="KW-0067">ATP-binding</keyword>
<keyword id="KW-0238">DNA-binding</keyword>
<keyword id="KW-0479">Metal-binding</keyword>
<keyword id="KW-0547">Nucleotide-binding</keyword>
<keyword id="KW-0678">Repressor</keyword>
<keyword id="KW-0804">Transcription</keyword>
<keyword id="KW-0805">Transcription regulation</keyword>
<keyword id="KW-0862">Zinc</keyword>
<keyword id="KW-0863">Zinc-finger</keyword>
<feature type="chain" id="PRO_0000182346" description="Transcriptional repressor NrdR">
    <location>
        <begin position="1"/>
        <end position="156"/>
    </location>
</feature>
<feature type="domain" description="ATP-cone" evidence="1">
    <location>
        <begin position="49"/>
        <end position="139"/>
    </location>
</feature>
<feature type="zinc finger region" evidence="1">
    <location>
        <begin position="3"/>
        <end position="34"/>
    </location>
</feature>
<comment type="function">
    <text evidence="1">Negatively regulates transcription of bacterial ribonucleotide reductase nrd genes and operons by binding to NrdR-boxes.</text>
</comment>
<comment type="cofactor">
    <cofactor evidence="1">
        <name>Zn(2+)</name>
        <dbReference type="ChEBI" id="CHEBI:29105"/>
    </cofactor>
    <text evidence="1">Binds 1 zinc ion.</text>
</comment>
<comment type="similarity">
    <text evidence="1">Belongs to the NrdR family.</text>
</comment>
<accession>Q5HF87</accession>